<gene>
    <name type="primary">GULO</name>
</gene>
<accession>Q90YK3</accession>
<feature type="chain" id="PRO_0000128162" description="L-gulonolactone oxidase">
    <location>
        <begin position="1"/>
        <end position="440"/>
    </location>
</feature>
<feature type="transmembrane region" description="Helical" evidence="2">
    <location>
        <begin position="245"/>
        <end position="267"/>
    </location>
</feature>
<feature type="domain" description="FAD-binding PCMH-type" evidence="3">
    <location>
        <begin position="17"/>
        <end position="187"/>
    </location>
</feature>
<feature type="modified residue" description="Pros-8alpha-FAD histidine" evidence="1">
    <location>
        <position position="54"/>
    </location>
</feature>
<dbReference type="EC" id="1.1.3.8"/>
<dbReference type="EMBL" id="AY039838">
    <property type="protein sequence ID" value="AAK73281.1"/>
    <property type="molecule type" value="mRNA"/>
</dbReference>
<dbReference type="SMR" id="Q90YK3"/>
<dbReference type="BRENDA" id="1.1.3.8">
    <property type="organism ID" value="5642"/>
</dbReference>
<dbReference type="UniPathway" id="UPA00991">
    <property type="reaction ID" value="UER00939"/>
</dbReference>
<dbReference type="GO" id="GO:0005789">
    <property type="term" value="C:endoplasmic reticulum membrane"/>
    <property type="evidence" value="ECO:0007669"/>
    <property type="project" value="UniProtKB-SubCell"/>
</dbReference>
<dbReference type="GO" id="GO:0003885">
    <property type="term" value="F:D-arabinono-1,4-lactone oxidase activity"/>
    <property type="evidence" value="ECO:0007669"/>
    <property type="project" value="InterPro"/>
</dbReference>
<dbReference type="GO" id="GO:0071949">
    <property type="term" value="F:FAD binding"/>
    <property type="evidence" value="ECO:0007669"/>
    <property type="project" value="InterPro"/>
</dbReference>
<dbReference type="GO" id="GO:0050660">
    <property type="term" value="F:flavin adenine dinucleotide binding"/>
    <property type="evidence" value="ECO:0000250"/>
    <property type="project" value="UniProtKB"/>
</dbReference>
<dbReference type="GO" id="GO:0050105">
    <property type="term" value="F:L-gulonolactone oxidase activity"/>
    <property type="evidence" value="ECO:0000250"/>
    <property type="project" value="UniProtKB"/>
</dbReference>
<dbReference type="GO" id="GO:0019853">
    <property type="term" value="P:L-ascorbic acid biosynthetic process"/>
    <property type="evidence" value="ECO:0000250"/>
    <property type="project" value="UniProtKB"/>
</dbReference>
<dbReference type="FunFam" id="3.30.43.10:FF:000014">
    <property type="entry name" value="L-gulonolactone oxidase"/>
    <property type="match status" value="1"/>
</dbReference>
<dbReference type="Gene3D" id="3.30.465.10">
    <property type="match status" value="1"/>
</dbReference>
<dbReference type="Gene3D" id="3.30.70.2520">
    <property type="match status" value="1"/>
</dbReference>
<dbReference type="Gene3D" id="3.30.43.10">
    <property type="entry name" value="Uridine Diphospho-n-acetylenolpyruvylglucosamine Reductase, domain 2"/>
    <property type="match status" value="1"/>
</dbReference>
<dbReference type="Gene3D" id="1.10.45.10">
    <property type="entry name" value="Vanillyl-alcohol Oxidase, Chain A, domain 4"/>
    <property type="match status" value="1"/>
</dbReference>
<dbReference type="InterPro" id="IPR007173">
    <property type="entry name" value="ALO_C"/>
</dbReference>
<dbReference type="InterPro" id="IPR016166">
    <property type="entry name" value="FAD-bd_PCMH"/>
</dbReference>
<dbReference type="InterPro" id="IPR036318">
    <property type="entry name" value="FAD-bd_PCMH-like_sf"/>
</dbReference>
<dbReference type="InterPro" id="IPR016167">
    <property type="entry name" value="FAD-bd_PCMH_sub1"/>
</dbReference>
<dbReference type="InterPro" id="IPR016169">
    <property type="entry name" value="FAD-bd_PCMH_sub2"/>
</dbReference>
<dbReference type="InterPro" id="IPR010031">
    <property type="entry name" value="FAD_lactone_oxidase-like"/>
</dbReference>
<dbReference type="InterPro" id="IPR006094">
    <property type="entry name" value="Oxid_FAD_bind_N"/>
</dbReference>
<dbReference type="InterPro" id="IPR006093">
    <property type="entry name" value="Oxy_OxRdtase_FAD_BS"/>
</dbReference>
<dbReference type="InterPro" id="IPR030654">
    <property type="entry name" value="Sugar_lactone_oxidase"/>
</dbReference>
<dbReference type="InterPro" id="IPR016171">
    <property type="entry name" value="Vanillyl_alc_oxidase_C-sub2"/>
</dbReference>
<dbReference type="NCBIfam" id="TIGR01678">
    <property type="entry name" value="FAD_lactone_ox"/>
    <property type="match status" value="1"/>
</dbReference>
<dbReference type="PANTHER" id="PTHR43762">
    <property type="entry name" value="L-GULONOLACTONE OXIDASE"/>
    <property type="match status" value="1"/>
</dbReference>
<dbReference type="PANTHER" id="PTHR43762:SF8">
    <property type="entry name" value="L-GULONOLACTONE OXIDASE"/>
    <property type="match status" value="1"/>
</dbReference>
<dbReference type="Pfam" id="PF04030">
    <property type="entry name" value="ALO"/>
    <property type="match status" value="1"/>
</dbReference>
<dbReference type="Pfam" id="PF01565">
    <property type="entry name" value="FAD_binding_4"/>
    <property type="match status" value="1"/>
</dbReference>
<dbReference type="PIRSF" id="PIRSF000136">
    <property type="entry name" value="LGO_GLO"/>
    <property type="match status" value="1"/>
</dbReference>
<dbReference type="SUPFAM" id="SSF56176">
    <property type="entry name" value="FAD-binding/transporter-associated domain-like"/>
    <property type="match status" value="1"/>
</dbReference>
<dbReference type="PROSITE" id="PS51387">
    <property type="entry name" value="FAD_PCMH"/>
    <property type="match status" value="1"/>
</dbReference>
<dbReference type="PROSITE" id="PS00862">
    <property type="entry name" value="OX2_COVAL_FAD"/>
    <property type="match status" value="1"/>
</dbReference>
<comment type="function">
    <text evidence="1">Oxidizes L-gulono-1,4-lactone to hydrogen peroxide and L-xylo-hexulonolactone which spontaneously isomerizes to L-ascorbate.</text>
</comment>
<comment type="catalytic activity">
    <reaction>
        <text>L-gulono-1,4-lactone + O2 = L-ascorbate + H2O2 + H(+)</text>
        <dbReference type="Rhea" id="RHEA:32363"/>
        <dbReference type="ChEBI" id="CHEBI:15378"/>
        <dbReference type="ChEBI" id="CHEBI:15379"/>
        <dbReference type="ChEBI" id="CHEBI:16240"/>
        <dbReference type="ChEBI" id="CHEBI:17587"/>
        <dbReference type="ChEBI" id="CHEBI:38290"/>
        <dbReference type="EC" id="1.1.3.8"/>
    </reaction>
</comment>
<comment type="cofactor">
    <cofactor evidence="1">
        <name>FAD</name>
        <dbReference type="ChEBI" id="CHEBI:57692"/>
    </cofactor>
</comment>
<comment type="pathway">
    <text>Cofactor biosynthesis; L-ascorbate biosynthesis via UDP-alpha-D-glucuronate pathway; L-ascorbate from UDP-alpha-D-glucuronate: step 4/4.</text>
</comment>
<comment type="subcellular location">
    <subcellularLocation>
        <location evidence="1">Microsome membrane</location>
        <topology evidence="1">Single-pass membrane protein</topology>
    </subcellularLocation>
    <subcellularLocation>
        <location evidence="1">Endoplasmic reticulum membrane</location>
        <topology evidence="1">Single-pass membrane protein</topology>
    </subcellularLocation>
</comment>
<comment type="similarity">
    <text evidence="4">Belongs to the oxygen-dependent FAD-linked oxidoreductase family.</text>
</comment>
<proteinExistence type="evidence at transcript level"/>
<organism>
    <name type="scientific">Scyliorhinus torazame</name>
    <name type="common">Cloudy catshark</name>
    <name type="synonym">Catulus torazame</name>
    <dbReference type="NCBI Taxonomy" id="75743"/>
    <lineage>
        <taxon>Eukaryota</taxon>
        <taxon>Metazoa</taxon>
        <taxon>Chordata</taxon>
        <taxon>Craniata</taxon>
        <taxon>Vertebrata</taxon>
        <taxon>Chondrichthyes</taxon>
        <taxon>Elasmobranchii</taxon>
        <taxon>Galeomorphii</taxon>
        <taxon>Galeoidea</taxon>
        <taxon>Carcharhiniformes</taxon>
        <taxon>Scyliorhinidae</taxon>
        <taxon>Scyliorhinus</taxon>
    </lineage>
</organism>
<protein>
    <recommendedName>
        <fullName>L-gulonolactone oxidase</fullName>
        <shortName>LGO</shortName>
        <ecNumber>1.1.3.8</ecNumber>
    </recommendedName>
    <alternativeName>
        <fullName>L-gulono-gamma-lactone oxidase</fullName>
        <shortName>GLO</shortName>
    </alternativeName>
</protein>
<evidence type="ECO:0000250" key="1"/>
<evidence type="ECO:0000255" key="2"/>
<evidence type="ECO:0000255" key="3">
    <source>
        <dbReference type="PROSITE-ProRule" id="PRU00718"/>
    </source>
</evidence>
<evidence type="ECO:0000305" key="4"/>
<keyword id="KW-0060">Ascorbate biosynthesis</keyword>
<keyword id="KW-0256">Endoplasmic reticulum</keyword>
<keyword id="KW-0274">FAD</keyword>
<keyword id="KW-0285">Flavoprotein</keyword>
<keyword id="KW-0472">Membrane</keyword>
<keyword id="KW-0492">Microsome</keyword>
<keyword id="KW-0560">Oxidoreductase</keyword>
<keyword id="KW-0812">Transmembrane</keyword>
<keyword id="KW-1133">Transmembrane helix</keyword>
<name>GGLO_SCYTO</name>
<reference key="1">
    <citation type="journal article" date="2002" name="Aquaculture">
        <title>Isolation and transient expression of a cDNA encoding L-gulono-g-lactone oxidase, a key enzyme for L-ascorbic acid biosynthesis, from the tiger shark Scyliorhinus torazame.</title>
        <authorList>
            <person name="Nam Y.K."/>
            <person name="Cho Y.S."/>
            <person name="Douglas S.E."/>
            <person name="Gallant J.W."/>
            <person name="Reith M.E."/>
            <person name="Kim D.S."/>
        </authorList>
        <dbReference type="AGRICOLA" id="IND23320045"/>
    </citation>
    <scope>NUCLEOTIDE SEQUENCE [MRNA]</scope>
</reference>
<sequence>MDQGTMGYQFENWATTYSCEPELYFEPTTVEEIRQILELANQRNKRVKVVGCGHSPSDIACTDNYLVRLNKLNRILQVDKERKWITAEAGILLSDLNEKLDALGLALSNIGAVSDVALGGVIGTGTHNTGIQHGILATQIVAMTLMTAAGDTLECSNTVNREIFQATRLHLGSLGVVLNVTIQCVPAFRIHLQQFPKTLTEVLGDLDTHLKQSEYFRFFWFPHTDKVTVFYADRTNKPIKTTSSWFWNYAIGYYLLEFLLWISVFVPRLVPWINRLFYWLLYSAKAEQVKRSDKAFNFDCLFKQHVSDWALPIKQTRAALEQLKDWLDNNPNVRAHFPVEVRFVRADDILLSPCYRQDSCYINIIMYRPYGKEVPREGYWAMYEEIMKRNGGRPHWAKAHSLLRQDFEKIYPAFHKFCSIREELDPSGMFLNNYLEKTFF</sequence>